<reference key="1">
    <citation type="journal article" date="2002" name="Nucleic Acids Res.">
        <title>Genome sequence of Oceanobacillus iheyensis isolated from the Iheya Ridge and its unexpected adaptive capabilities to extreme environments.</title>
        <authorList>
            <person name="Takami H."/>
            <person name="Takaki Y."/>
            <person name="Uchiyama I."/>
        </authorList>
    </citation>
    <scope>NUCLEOTIDE SEQUENCE [LARGE SCALE GENOMIC DNA]</scope>
    <source>
        <strain>DSM 14371 / CIP 107618 / JCM 11309 / KCTC 3954 / HTE831</strain>
    </source>
</reference>
<accession>Q8EQ58</accession>
<feature type="chain" id="PRO_0000155881" description="Ribonuclease Z">
    <location>
        <begin position="1"/>
        <end position="306"/>
    </location>
</feature>
<feature type="active site" description="Proton acceptor" evidence="1">
    <location>
        <position position="67"/>
    </location>
</feature>
<feature type="binding site" evidence="1">
    <location>
        <position position="63"/>
    </location>
    <ligand>
        <name>Zn(2+)</name>
        <dbReference type="ChEBI" id="CHEBI:29105"/>
        <label>1</label>
        <note>catalytic</note>
    </ligand>
</feature>
<feature type="binding site" evidence="1">
    <location>
        <position position="65"/>
    </location>
    <ligand>
        <name>Zn(2+)</name>
        <dbReference type="ChEBI" id="CHEBI:29105"/>
        <label>1</label>
        <note>catalytic</note>
    </ligand>
</feature>
<feature type="binding site" evidence="1">
    <location>
        <position position="67"/>
    </location>
    <ligand>
        <name>Zn(2+)</name>
        <dbReference type="ChEBI" id="CHEBI:29105"/>
        <label>2</label>
        <note>catalytic</note>
    </ligand>
</feature>
<feature type="binding site" evidence="1">
    <location>
        <position position="68"/>
    </location>
    <ligand>
        <name>Zn(2+)</name>
        <dbReference type="ChEBI" id="CHEBI:29105"/>
        <label>2</label>
        <note>catalytic</note>
    </ligand>
</feature>
<feature type="binding site" evidence="1">
    <location>
        <position position="142"/>
    </location>
    <ligand>
        <name>Zn(2+)</name>
        <dbReference type="ChEBI" id="CHEBI:29105"/>
        <label>1</label>
        <note>catalytic</note>
    </ligand>
</feature>
<feature type="binding site" evidence="1">
    <location>
        <position position="213"/>
    </location>
    <ligand>
        <name>Zn(2+)</name>
        <dbReference type="ChEBI" id="CHEBI:29105"/>
        <label>1</label>
        <note>catalytic</note>
    </ligand>
</feature>
<feature type="binding site" evidence="1">
    <location>
        <position position="213"/>
    </location>
    <ligand>
        <name>Zn(2+)</name>
        <dbReference type="ChEBI" id="CHEBI:29105"/>
        <label>2</label>
        <note>catalytic</note>
    </ligand>
</feature>
<feature type="binding site" evidence="1">
    <location>
        <position position="271"/>
    </location>
    <ligand>
        <name>Zn(2+)</name>
        <dbReference type="ChEBI" id="CHEBI:29105"/>
        <label>2</label>
        <note>catalytic</note>
    </ligand>
</feature>
<name>RNZ_OCEIH</name>
<keyword id="KW-0255">Endonuclease</keyword>
<keyword id="KW-0378">Hydrolase</keyword>
<keyword id="KW-0479">Metal-binding</keyword>
<keyword id="KW-0540">Nuclease</keyword>
<keyword id="KW-1185">Reference proteome</keyword>
<keyword id="KW-0819">tRNA processing</keyword>
<keyword id="KW-0862">Zinc</keyword>
<organism>
    <name type="scientific">Oceanobacillus iheyensis (strain DSM 14371 / CIP 107618 / JCM 11309 / KCTC 3954 / HTE831)</name>
    <dbReference type="NCBI Taxonomy" id="221109"/>
    <lineage>
        <taxon>Bacteria</taxon>
        <taxon>Bacillati</taxon>
        <taxon>Bacillota</taxon>
        <taxon>Bacilli</taxon>
        <taxon>Bacillales</taxon>
        <taxon>Bacillaceae</taxon>
        <taxon>Oceanobacillus</taxon>
    </lineage>
</organism>
<evidence type="ECO:0000255" key="1">
    <source>
        <dbReference type="HAMAP-Rule" id="MF_01818"/>
    </source>
</evidence>
<sequence length="306" mass="34606">MELVFLGTGAGLPSKTRNVSAVALNMTQEINEVWLFDCGEATQHQILHTNLKPRKITKIFITHLHGDHIYGLPGFLSSRSFQSGENQPLCIYGPIGIKEFVESTLRLSQTNLTYPITIKEITEDGNLFETNEMMVETKKLQHGIDSYGYRIKEKDKPGELLVDKLKQIGIAPGPIYQQIKENEITTLDNGSIIYRNDVLGPAKKGKVISILGDTRYSIDHIPFIKFSDILVHESTFTQDKELLAFEYNHSTNVQAAKLAKEANINKLYLTHVSSRYQAEDIDSIIEEARKIFPSTWLANDFSVYEI</sequence>
<dbReference type="EC" id="3.1.26.11" evidence="1"/>
<dbReference type="EMBL" id="BA000028">
    <property type="protein sequence ID" value="BAC13812.1"/>
    <property type="molecule type" value="Genomic_DNA"/>
</dbReference>
<dbReference type="RefSeq" id="WP_011066252.1">
    <property type="nucleotide sequence ID" value="NC_004193.1"/>
</dbReference>
<dbReference type="SMR" id="Q8EQ58"/>
<dbReference type="STRING" id="221109.gene:10734096"/>
<dbReference type="KEGG" id="oih:OB1856"/>
<dbReference type="eggNOG" id="COG1234">
    <property type="taxonomic scope" value="Bacteria"/>
</dbReference>
<dbReference type="HOGENOM" id="CLU_031317_2_0_9"/>
<dbReference type="OrthoDB" id="9800940at2"/>
<dbReference type="PhylomeDB" id="Q8EQ58"/>
<dbReference type="Proteomes" id="UP000000822">
    <property type="component" value="Chromosome"/>
</dbReference>
<dbReference type="GO" id="GO:0042781">
    <property type="term" value="F:3'-tRNA processing endoribonuclease activity"/>
    <property type="evidence" value="ECO:0007669"/>
    <property type="project" value="UniProtKB-UniRule"/>
</dbReference>
<dbReference type="GO" id="GO:0008270">
    <property type="term" value="F:zinc ion binding"/>
    <property type="evidence" value="ECO:0007669"/>
    <property type="project" value="UniProtKB-UniRule"/>
</dbReference>
<dbReference type="CDD" id="cd07717">
    <property type="entry name" value="RNaseZ_ZiPD-like_MBL-fold"/>
    <property type="match status" value="1"/>
</dbReference>
<dbReference type="FunFam" id="3.60.15.10:FF:000002">
    <property type="entry name" value="Ribonuclease Z"/>
    <property type="match status" value="1"/>
</dbReference>
<dbReference type="Gene3D" id="3.60.15.10">
    <property type="entry name" value="Ribonuclease Z/Hydroxyacylglutathione hydrolase-like"/>
    <property type="match status" value="1"/>
</dbReference>
<dbReference type="HAMAP" id="MF_01818">
    <property type="entry name" value="RNase_Z_BN"/>
    <property type="match status" value="1"/>
</dbReference>
<dbReference type="InterPro" id="IPR001279">
    <property type="entry name" value="Metallo-B-lactamas"/>
</dbReference>
<dbReference type="InterPro" id="IPR036866">
    <property type="entry name" value="RibonucZ/Hydroxyglut_hydro"/>
</dbReference>
<dbReference type="InterPro" id="IPR013471">
    <property type="entry name" value="RNase_Z/BN"/>
</dbReference>
<dbReference type="NCBIfam" id="NF000801">
    <property type="entry name" value="PRK00055.1-3"/>
    <property type="match status" value="1"/>
</dbReference>
<dbReference type="NCBIfam" id="TIGR02651">
    <property type="entry name" value="RNase_Z"/>
    <property type="match status" value="1"/>
</dbReference>
<dbReference type="PANTHER" id="PTHR46018">
    <property type="entry name" value="ZINC PHOSPHODIESTERASE ELAC PROTEIN 1"/>
    <property type="match status" value="1"/>
</dbReference>
<dbReference type="PANTHER" id="PTHR46018:SF2">
    <property type="entry name" value="ZINC PHOSPHODIESTERASE ELAC PROTEIN 1"/>
    <property type="match status" value="1"/>
</dbReference>
<dbReference type="Pfam" id="PF00753">
    <property type="entry name" value="Lactamase_B"/>
    <property type="match status" value="1"/>
</dbReference>
<dbReference type="SUPFAM" id="SSF56281">
    <property type="entry name" value="Metallo-hydrolase/oxidoreductase"/>
    <property type="match status" value="1"/>
</dbReference>
<proteinExistence type="inferred from homology"/>
<comment type="function">
    <text evidence="1">Zinc phosphodiesterase, which displays some tRNA 3'-processing endonuclease activity. Probably involved in tRNA maturation, by removing a 3'-trailer from precursor tRNA.</text>
</comment>
<comment type="catalytic activity">
    <reaction evidence="1">
        <text>Endonucleolytic cleavage of RNA, removing extra 3' nucleotides from tRNA precursor, generating 3' termini of tRNAs. A 3'-hydroxy group is left at the tRNA terminus and a 5'-phosphoryl group is left at the trailer molecule.</text>
        <dbReference type="EC" id="3.1.26.11"/>
    </reaction>
</comment>
<comment type="cofactor">
    <cofactor evidence="1">
        <name>Zn(2+)</name>
        <dbReference type="ChEBI" id="CHEBI:29105"/>
    </cofactor>
    <text evidence="1">Binds 2 Zn(2+) ions.</text>
</comment>
<comment type="subunit">
    <text evidence="1">Homodimer.</text>
</comment>
<comment type="similarity">
    <text evidence="1">Belongs to the RNase Z family.</text>
</comment>
<gene>
    <name evidence="1" type="primary">rnz</name>
    <name type="ordered locus">OB1856</name>
</gene>
<protein>
    <recommendedName>
        <fullName evidence="1">Ribonuclease Z</fullName>
        <shortName evidence="1">RNase Z</shortName>
        <ecNumber evidence="1">3.1.26.11</ecNumber>
    </recommendedName>
    <alternativeName>
        <fullName evidence="1">tRNA 3 endonuclease</fullName>
    </alternativeName>
    <alternativeName>
        <fullName evidence="1">tRNase Z</fullName>
    </alternativeName>
</protein>